<keyword id="KW-0521">NADP</keyword>
<keyword id="KW-0560">Oxidoreductase</keyword>
<keyword id="KW-0843">Virulence</keyword>
<accession>Q14RS1</accession>
<evidence type="ECO:0000250" key="1">
    <source>
        <dbReference type="UniProtKB" id="L0E2Z4"/>
    </source>
</evidence>
<evidence type="ECO:0000250" key="2">
    <source>
        <dbReference type="UniProtKB" id="O93868"/>
    </source>
</evidence>
<evidence type="ECO:0000269" key="3">
    <source>
    </source>
</evidence>
<evidence type="ECO:0000269" key="4">
    <source>
    </source>
</evidence>
<evidence type="ECO:0000269" key="5">
    <source>
    </source>
</evidence>
<evidence type="ECO:0000303" key="6">
    <source>
    </source>
</evidence>
<evidence type="ECO:0000305" key="7"/>
<evidence type="ECO:0000305" key="8">
    <source>
    </source>
</evidence>
<comment type="function">
    <text evidence="3 4 5 8">Short-chain dehydrogenase/reductase; part of the gene cluster that mediates the biosynthesis of abscisic acid (ABA), a phytohormone that acts antagonistically toward salicylic acid (SA), jasmonic acid (JA) and ethylene (ETH) signaling, to impede plant defense responses (PubMed:15240257, PubMed:16820452). The first step of the pathway catalyzes the reaction from farnesyl diphosphate to alpha-ionylideneethane performed by the alpha-ionylideneethane synthase aba3 via a three-step reaction mechanism involving 2 neutral intermediates, beta-farnesene and allofarnesene (PubMed:30226766). The cytochrome P450 monooxygenase aba1 might then be involved in the conversion of alpha-ionylideneethane to alpha-ionylideneacetic acid (Probable). Alpha-ionylideneacetic acid is further converted to abscisic acid in 2 steps involving the cytochrome P450 monooxygenase aba2 and the short-chain dehydrogenase/reductase aba4, via the intermediates 1'-deoxy-ABA or 1',4'-trans-diol-ABA, depending on the order of action of these 2 enzymes (Probable). Aba2 is responsible for the hydroxylation of carbon atom C-1' and aba4 might be involved in the oxidation of the C-4' carbon atom (PubMed:16820452).</text>
</comment>
<comment type="pathway">
    <text evidence="4">Hormone biosynthesis.</text>
</comment>
<comment type="induction">
    <text evidence="4">Constitutively expressed at a low level.</text>
</comment>
<comment type="disruption phenotype">
    <text evidence="4">Reduces the production of abscisic acid (ABA) and accumulates a compound that corresponds probably to 1',4'-trans-diol-ABA.</text>
</comment>
<comment type="similarity">
    <text evidence="7">Belongs to the short-chain dehydrogenases/reductases (SDR) family.</text>
</comment>
<protein>
    <recommendedName>
        <fullName evidence="6">Short-chain dehydrogenase/reductase aba4</fullName>
        <ecNumber evidence="8">1.1.1.-</ecNumber>
    </recommendedName>
    <alternativeName>
        <fullName evidence="6">Abscisic acid biosynthesis cluster protein 4</fullName>
    </alternativeName>
</protein>
<feature type="chain" id="PRO_0000448421" description="Short-chain dehydrogenase/reductase aba4">
    <location>
        <begin position="1"/>
        <end position="258"/>
    </location>
</feature>
<feature type="active site" description="Proton donor" evidence="2">
    <location>
        <position position="146"/>
    </location>
</feature>
<feature type="active site" description="Proton donor" evidence="2">
    <location>
        <position position="160"/>
    </location>
</feature>
<feature type="active site" description="Lowers pKa of active site Tyr" evidence="2">
    <location>
        <position position="164"/>
    </location>
</feature>
<feature type="binding site" evidence="1">
    <location>
        <position position="20"/>
    </location>
    <ligand>
        <name>NADP(+)</name>
        <dbReference type="ChEBI" id="CHEBI:58349"/>
    </ligand>
</feature>
<feature type="binding site" evidence="1">
    <location>
        <position position="66"/>
    </location>
    <ligand>
        <name>NADP(+)</name>
        <dbReference type="ChEBI" id="CHEBI:58349"/>
    </ligand>
</feature>
<feature type="binding site" evidence="1">
    <location>
        <position position="130"/>
    </location>
    <ligand>
        <name>NADP(+)</name>
        <dbReference type="ChEBI" id="CHEBI:58349"/>
    </ligand>
</feature>
<feature type="binding site" evidence="2">
    <location>
        <position position="160"/>
    </location>
    <ligand>
        <name>NADP(+)</name>
        <dbReference type="ChEBI" id="CHEBI:58349"/>
    </ligand>
</feature>
<feature type="binding site" evidence="2">
    <location>
        <position position="164"/>
    </location>
    <ligand>
        <name>NADP(+)</name>
        <dbReference type="ChEBI" id="CHEBI:58349"/>
    </ligand>
</feature>
<feature type="binding site" evidence="2">
    <location>
        <position position="193"/>
    </location>
    <ligand>
        <name>NADP(+)</name>
        <dbReference type="ChEBI" id="CHEBI:58349"/>
    </ligand>
</feature>
<feature type="binding site" evidence="1">
    <location>
        <position position="195"/>
    </location>
    <ligand>
        <name>NADP(+)</name>
        <dbReference type="ChEBI" id="CHEBI:58349"/>
    </ligand>
</feature>
<gene>
    <name evidence="6" type="primary">aba4</name>
</gene>
<reference key="1">
    <citation type="journal article" date="2006" name="Appl. Environ. Microbiol.">
        <title>Identification of an abscisic acid gene cluster in the grey mold Botrytis cinerea.</title>
        <authorList>
            <person name="Siewers V."/>
            <person name="Kokkelink L."/>
            <person name="Smedsgaard J."/>
            <person name="Tudzynski P."/>
        </authorList>
    </citation>
    <scope>NUCLEOTIDE SEQUENCE [GENOMIC DNA]</scope>
    <scope>INDUCTION</scope>
    <scope>FUNCTION</scope>
    <scope>DISRUPTION PHENOTYPE</scope>
    <scope>PATHWAY</scope>
    <source>
        <strain>SAS56</strain>
    </source>
</reference>
<reference key="2">
    <citation type="journal article" date="2004" name="Appl. Environ. Microbiol.">
        <title>The P450 monooxygenase BcABA1 is essential for abscisic acid biosynthesis in Botrytis cinerea.</title>
        <authorList>
            <person name="Siewers V."/>
            <person name="Smedsgaard J."/>
            <person name="Tudzynski P."/>
        </authorList>
    </citation>
    <scope>FUNCTION</scope>
</reference>
<reference key="3">
    <citation type="journal article" date="2018" name="J. Am. Chem. Soc.">
        <title>Unveiling biosynthesis of the phytohormone abscisic acid in fungi: unprecedented mechanism of core scaffold formation catalyzed by an unusual sesquiterpene synthase.</title>
        <authorList>
            <person name="Takino J."/>
            <person name="Kozaki T."/>
            <person name="Sato Y."/>
            <person name="Liu C."/>
            <person name="Ozaki T."/>
            <person name="Minami A."/>
            <person name="Oikawa H."/>
        </authorList>
    </citation>
    <scope>FUNCTION</scope>
</reference>
<name>ABA4_BOTFU</name>
<organism>
    <name type="scientific">Botryotinia fuckeliana</name>
    <name type="common">Noble rot fungus</name>
    <name type="synonym">Botrytis cinerea</name>
    <dbReference type="NCBI Taxonomy" id="40559"/>
    <lineage>
        <taxon>Eukaryota</taxon>
        <taxon>Fungi</taxon>
        <taxon>Dikarya</taxon>
        <taxon>Ascomycota</taxon>
        <taxon>Pezizomycotina</taxon>
        <taxon>Leotiomycetes</taxon>
        <taxon>Helotiales</taxon>
        <taxon>Sclerotiniaceae</taxon>
        <taxon>Botrytis</taxon>
    </lineage>
</organism>
<dbReference type="EC" id="1.1.1.-" evidence="8"/>
<dbReference type="EMBL" id="AM237450">
    <property type="protein sequence ID" value="CAJ87068.1"/>
    <property type="molecule type" value="Genomic_DNA"/>
</dbReference>
<dbReference type="GO" id="GO:0016491">
    <property type="term" value="F:oxidoreductase activity"/>
    <property type="evidence" value="ECO:0007669"/>
    <property type="project" value="UniProtKB-KW"/>
</dbReference>
<dbReference type="GO" id="GO:0009688">
    <property type="term" value="P:abscisic acid biosynthetic process"/>
    <property type="evidence" value="ECO:0000315"/>
    <property type="project" value="GO_Central"/>
</dbReference>
<dbReference type="CDD" id="cd05233">
    <property type="entry name" value="SDR_c"/>
    <property type="match status" value="1"/>
</dbReference>
<dbReference type="FunFam" id="3.40.50.720:FF:000084">
    <property type="entry name" value="Short-chain dehydrogenase reductase"/>
    <property type="match status" value="1"/>
</dbReference>
<dbReference type="Gene3D" id="3.40.50.720">
    <property type="entry name" value="NAD(P)-binding Rossmann-like Domain"/>
    <property type="match status" value="1"/>
</dbReference>
<dbReference type="InterPro" id="IPR036291">
    <property type="entry name" value="NAD(P)-bd_dom_sf"/>
</dbReference>
<dbReference type="InterPro" id="IPR020904">
    <property type="entry name" value="Sc_DH/Rdtase_CS"/>
</dbReference>
<dbReference type="InterPro" id="IPR002347">
    <property type="entry name" value="SDR_fam"/>
</dbReference>
<dbReference type="PANTHER" id="PTHR24321">
    <property type="entry name" value="DEHYDROGENASES, SHORT CHAIN"/>
    <property type="match status" value="1"/>
</dbReference>
<dbReference type="PANTHER" id="PTHR24321:SF8">
    <property type="entry name" value="ESTRADIOL 17-BETA-DEHYDROGENASE 8-RELATED"/>
    <property type="match status" value="1"/>
</dbReference>
<dbReference type="Pfam" id="PF13561">
    <property type="entry name" value="adh_short_C2"/>
    <property type="match status" value="1"/>
</dbReference>
<dbReference type="PRINTS" id="PR00081">
    <property type="entry name" value="GDHRDH"/>
</dbReference>
<dbReference type="PRINTS" id="PR00080">
    <property type="entry name" value="SDRFAMILY"/>
</dbReference>
<dbReference type="SUPFAM" id="SSF51735">
    <property type="entry name" value="NAD(P)-binding Rossmann-fold domains"/>
    <property type="match status" value="1"/>
</dbReference>
<dbReference type="PROSITE" id="PS00061">
    <property type="entry name" value="ADH_SHORT"/>
    <property type="match status" value="1"/>
</dbReference>
<proteinExistence type="evidence at transcript level"/>
<sequence>MSSQPFTNKVIALTGSASGIGLETAKLLASRGARLSLADIQEDKLKELQAXXESEYHVDVITTKVDVRKFGEVEAWINKTIDNFGKLDGSANLAGVAPESIGLKGIVEQDLDEWEFVLGVNLTGTMNSLKAQLKVMANNGSIVNASSIRGLTGAAKNASYSSAKHGIIGLTRTAAKEVGGKGIRVNAICPGRISTPMLKTAENSIGLHLQPGSANYPPIALGRDGEAKEVAQLVAFLLSDESTYISGADISIDGGWRC</sequence>